<organism>
    <name type="scientific">Chlorobium phaeobacteroides (strain BS1)</name>
    <dbReference type="NCBI Taxonomy" id="331678"/>
    <lineage>
        <taxon>Bacteria</taxon>
        <taxon>Pseudomonadati</taxon>
        <taxon>Chlorobiota</taxon>
        <taxon>Chlorobiia</taxon>
        <taxon>Chlorobiales</taxon>
        <taxon>Chlorobiaceae</taxon>
        <taxon>Chlorobium/Pelodictyon group</taxon>
        <taxon>Chlorobium</taxon>
    </lineage>
</organism>
<sequence>MSTGKEKMKGKGKDGGGNEVVLCSFCGRGSDEVSSMVAGPKAFICDRCIMSSVEILRKEISAIKPTAQAVSQPFQPRLLNPKSIMESLGQYVIGQERARKSLSVAVYNHYKRIESQEWVRDDDDVVIEKSNILLIGPTGTGKTLLAQTLANLLEVPFTIVDATSLTEAGYVGDDVETILARLLQASDFNLERAEKGIIYVDEIDKIARKSANVSITRDVSGEGVQQALLKILEGAVVGVPPRGGRKHPEQQLINVNTRNILFICGGAFEGLDKIIGRRVAKASIGFGTAVKAQQLESDPEILKEVSQDDMHEYGLIPEFIGRLPVISTLDPLDSKALRNILVEPKNALIKQYQKLFEMEECELVFEDKALDSVVEIAIDRGTGARALRSVLEGIMIDIMFELPSMSGVRKCVITEAVIAGEGEPEFYYEDGKKKKTA</sequence>
<reference key="1">
    <citation type="submission" date="2008-06" db="EMBL/GenBank/DDBJ databases">
        <title>Complete sequence of Chlorobium phaeobacteroides BS1.</title>
        <authorList>
            <consortium name="US DOE Joint Genome Institute"/>
            <person name="Lucas S."/>
            <person name="Copeland A."/>
            <person name="Lapidus A."/>
            <person name="Glavina del Rio T."/>
            <person name="Dalin E."/>
            <person name="Tice H."/>
            <person name="Bruce D."/>
            <person name="Goodwin L."/>
            <person name="Pitluck S."/>
            <person name="Schmutz J."/>
            <person name="Larimer F."/>
            <person name="Land M."/>
            <person name="Hauser L."/>
            <person name="Kyrpides N."/>
            <person name="Ovchinnikova G."/>
            <person name="Li T."/>
            <person name="Liu Z."/>
            <person name="Zhao F."/>
            <person name="Overmann J."/>
            <person name="Bryant D.A."/>
            <person name="Richardson P."/>
        </authorList>
    </citation>
    <scope>NUCLEOTIDE SEQUENCE [LARGE SCALE GENOMIC DNA]</scope>
    <source>
        <strain>BS1</strain>
    </source>
</reference>
<protein>
    <recommendedName>
        <fullName evidence="1">ATP-dependent Clp protease ATP-binding subunit ClpX</fullName>
    </recommendedName>
</protein>
<gene>
    <name evidence="1" type="primary">clpX</name>
    <name type="ordered locus">Cphamn1_0675</name>
</gene>
<dbReference type="EMBL" id="CP001101">
    <property type="protein sequence ID" value="ACE03633.1"/>
    <property type="molecule type" value="Genomic_DNA"/>
</dbReference>
<dbReference type="SMR" id="B3ENA3"/>
<dbReference type="STRING" id="331678.Cphamn1_0675"/>
<dbReference type="KEGG" id="cpb:Cphamn1_0675"/>
<dbReference type="eggNOG" id="COG1219">
    <property type="taxonomic scope" value="Bacteria"/>
</dbReference>
<dbReference type="HOGENOM" id="CLU_014218_8_2_10"/>
<dbReference type="OrthoDB" id="9804062at2"/>
<dbReference type="GO" id="GO:0009376">
    <property type="term" value="C:HslUV protease complex"/>
    <property type="evidence" value="ECO:0007669"/>
    <property type="project" value="TreeGrafter"/>
</dbReference>
<dbReference type="GO" id="GO:0005524">
    <property type="term" value="F:ATP binding"/>
    <property type="evidence" value="ECO:0007669"/>
    <property type="project" value="UniProtKB-UniRule"/>
</dbReference>
<dbReference type="GO" id="GO:0016887">
    <property type="term" value="F:ATP hydrolysis activity"/>
    <property type="evidence" value="ECO:0007669"/>
    <property type="project" value="InterPro"/>
</dbReference>
<dbReference type="GO" id="GO:0140662">
    <property type="term" value="F:ATP-dependent protein folding chaperone"/>
    <property type="evidence" value="ECO:0007669"/>
    <property type="project" value="InterPro"/>
</dbReference>
<dbReference type="GO" id="GO:0046983">
    <property type="term" value="F:protein dimerization activity"/>
    <property type="evidence" value="ECO:0007669"/>
    <property type="project" value="InterPro"/>
</dbReference>
<dbReference type="GO" id="GO:0051082">
    <property type="term" value="F:unfolded protein binding"/>
    <property type="evidence" value="ECO:0007669"/>
    <property type="project" value="UniProtKB-UniRule"/>
</dbReference>
<dbReference type="GO" id="GO:0008270">
    <property type="term" value="F:zinc ion binding"/>
    <property type="evidence" value="ECO:0007669"/>
    <property type="project" value="InterPro"/>
</dbReference>
<dbReference type="GO" id="GO:0051301">
    <property type="term" value="P:cell division"/>
    <property type="evidence" value="ECO:0007669"/>
    <property type="project" value="TreeGrafter"/>
</dbReference>
<dbReference type="GO" id="GO:0051603">
    <property type="term" value="P:proteolysis involved in protein catabolic process"/>
    <property type="evidence" value="ECO:0007669"/>
    <property type="project" value="TreeGrafter"/>
</dbReference>
<dbReference type="CDD" id="cd19497">
    <property type="entry name" value="RecA-like_ClpX"/>
    <property type="match status" value="1"/>
</dbReference>
<dbReference type="FunFam" id="1.10.8.60:FF:000002">
    <property type="entry name" value="ATP-dependent Clp protease ATP-binding subunit ClpX"/>
    <property type="match status" value="1"/>
</dbReference>
<dbReference type="FunFam" id="3.40.50.300:FF:000005">
    <property type="entry name" value="ATP-dependent Clp protease ATP-binding subunit ClpX"/>
    <property type="match status" value="1"/>
</dbReference>
<dbReference type="Gene3D" id="1.10.8.60">
    <property type="match status" value="1"/>
</dbReference>
<dbReference type="Gene3D" id="6.20.220.10">
    <property type="entry name" value="ClpX chaperone, C4-type zinc finger domain"/>
    <property type="match status" value="1"/>
</dbReference>
<dbReference type="Gene3D" id="3.40.50.300">
    <property type="entry name" value="P-loop containing nucleotide triphosphate hydrolases"/>
    <property type="match status" value="1"/>
</dbReference>
<dbReference type="HAMAP" id="MF_00175">
    <property type="entry name" value="ClpX"/>
    <property type="match status" value="1"/>
</dbReference>
<dbReference type="InterPro" id="IPR003593">
    <property type="entry name" value="AAA+_ATPase"/>
</dbReference>
<dbReference type="InterPro" id="IPR050052">
    <property type="entry name" value="ATP-dep_Clp_protease_ClpX"/>
</dbReference>
<dbReference type="InterPro" id="IPR003959">
    <property type="entry name" value="ATPase_AAA_core"/>
</dbReference>
<dbReference type="InterPro" id="IPR019489">
    <property type="entry name" value="Clp_ATPase_C"/>
</dbReference>
<dbReference type="InterPro" id="IPR004487">
    <property type="entry name" value="Clp_protease_ATP-bd_su_ClpX"/>
</dbReference>
<dbReference type="InterPro" id="IPR046425">
    <property type="entry name" value="ClpX_bact"/>
</dbReference>
<dbReference type="InterPro" id="IPR027417">
    <property type="entry name" value="P-loop_NTPase"/>
</dbReference>
<dbReference type="InterPro" id="IPR010603">
    <property type="entry name" value="Znf_CppX_C4"/>
</dbReference>
<dbReference type="InterPro" id="IPR038366">
    <property type="entry name" value="Znf_CppX_C4_sf"/>
</dbReference>
<dbReference type="NCBIfam" id="TIGR00382">
    <property type="entry name" value="clpX"/>
    <property type="match status" value="1"/>
</dbReference>
<dbReference type="NCBIfam" id="NF003745">
    <property type="entry name" value="PRK05342.1"/>
    <property type="match status" value="1"/>
</dbReference>
<dbReference type="PANTHER" id="PTHR48102:SF7">
    <property type="entry name" value="ATP-DEPENDENT CLP PROTEASE ATP-BINDING SUBUNIT CLPX-LIKE, MITOCHONDRIAL"/>
    <property type="match status" value="1"/>
</dbReference>
<dbReference type="PANTHER" id="PTHR48102">
    <property type="entry name" value="ATP-DEPENDENT CLP PROTEASE ATP-BINDING SUBUNIT CLPX-LIKE, MITOCHONDRIAL-RELATED"/>
    <property type="match status" value="1"/>
</dbReference>
<dbReference type="Pfam" id="PF07724">
    <property type="entry name" value="AAA_2"/>
    <property type="match status" value="1"/>
</dbReference>
<dbReference type="Pfam" id="PF10431">
    <property type="entry name" value="ClpB_D2-small"/>
    <property type="match status" value="1"/>
</dbReference>
<dbReference type="Pfam" id="PF06689">
    <property type="entry name" value="zf-C4_ClpX"/>
    <property type="match status" value="1"/>
</dbReference>
<dbReference type="SMART" id="SM00382">
    <property type="entry name" value="AAA"/>
    <property type="match status" value="1"/>
</dbReference>
<dbReference type="SMART" id="SM01086">
    <property type="entry name" value="ClpB_D2-small"/>
    <property type="match status" value="1"/>
</dbReference>
<dbReference type="SMART" id="SM00994">
    <property type="entry name" value="zf-C4_ClpX"/>
    <property type="match status" value="1"/>
</dbReference>
<dbReference type="SUPFAM" id="SSF57716">
    <property type="entry name" value="Glucocorticoid receptor-like (DNA-binding domain)"/>
    <property type="match status" value="1"/>
</dbReference>
<dbReference type="SUPFAM" id="SSF52540">
    <property type="entry name" value="P-loop containing nucleoside triphosphate hydrolases"/>
    <property type="match status" value="1"/>
</dbReference>
<dbReference type="PROSITE" id="PS51902">
    <property type="entry name" value="CLPX_ZB"/>
    <property type="match status" value="1"/>
</dbReference>
<proteinExistence type="inferred from homology"/>
<keyword id="KW-0067">ATP-binding</keyword>
<keyword id="KW-0143">Chaperone</keyword>
<keyword id="KW-0479">Metal-binding</keyword>
<keyword id="KW-0547">Nucleotide-binding</keyword>
<keyword id="KW-0862">Zinc</keyword>
<evidence type="ECO:0000255" key="1">
    <source>
        <dbReference type="HAMAP-Rule" id="MF_00175"/>
    </source>
</evidence>
<evidence type="ECO:0000255" key="2">
    <source>
        <dbReference type="PROSITE-ProRule" id="PRU01250"/>
    </source>
</evidence>
<accession>B3ENA3</accession>
<comment type="function">
    <text evidence="1">ATP-dependent specificity component of the Clp protease. It directs the protease to specific substrates. Can perform chaperone functions in the absence of ClpP.</text>
</comment>
<comment type="subunit">
    <text evidence="1">Component of the ClpX-ClpP complex. Forms a hexameric ring that, in the presence of ATP, binds to fourteen ClpP subunits assembled into a disk-like structure with a central cavity, resembling the structure of eukaryotic proteasomes.</text>
</comment>
<comment type="similarity">
    <text evidence="1">Belongs to the ClpX chaperone family.</text>
</comment>
<feature type="chain" id="PRO_1000097935" description="ATP-dependent Clp protease ATP-binding subunit ClpX">
    <location>
        <begin position="1"/>
        <end position="437"/>
    </location>
</feature>
<feature type="domain" description="ClpX-type ZB" evidence="2">
    <location>
        <begin position="11"/>
        <end position="64"/>
    </location>
</feature>
<feature type="binding site" evidence="2">
    <location>
        <position position="23"/>
    </location>
    <ligand>
        <name>Zn(2+)</name>
        <dbReference type="ChEBI" id="CHEBI:29105"/>
    </ligand>
</feature>
<feature type="binding site" evidence="2">
    <location>
        <position position="26"/>
    </location>
    <ligand>
        <name>Zn(2+)</name>
        <dbReference type="ChEBI" id="CHEBI:29105"/>
    </ligand>
</feature>
<feature type="binding site" evidence="2">
    <location>
        <position position="45"/>
    </location>
    <ligand>
        <name>Zn(2+)</name>
        <dbReference type="ChEBI" id="CHEBI:29105"/>
    </ligand>
</feature>
<feature type="binding site" evidence="2">
    <location>
        <position position="48"/>
    </location>
    <ligand>
        <name>Zn(2+)</name>
        <dbReference type="ChEBI" id="CHEBI:29105"/>
    </ligand>
</feature>
<feature type="binding site" evidence="1">
    <location>
        <begin position="137"/>
        <end position="144"/>
    </location>
    <ligand>
        <name>ATP</name>
        <dbReference type="ChEBI" id="CHEBI:30616"/>
    </ligand>
</feature>
<name>CLPX_CHLPB</name>